<organism>
    <name type="scientific">Haemophilus influenzae (strain ATCC 51907 / DSM 11121 / KW20 / Rd)</name>
    <dbReference type="NCBI Taxonomy" id="71421"/>
    <lineage>
        <taxon>Bacteria</taxon>
        <taxon>Pseudomonadati</taxon>
        <taxon>Pseudomonadota</taxon>
        <taxon>Gammaproteobacteria</taxon>
        <taxon>Pasteurellales</taxon>
        <taxon>Pasteurellaceae</taxon>
        <taxon>Haemophilus</taxon>
    </lineage>
</organism>
<reference key="1">
    <citation type="journal article" date="1995" name="Science">
        <title>Whole-genome random sequencing and assembly of Haemophilus influenzae Rd.</title>
        <authorList>
            <person name="Fleischmann R.D."/>
            <person name="Adams M.D."/>
            <person name="White O."/>
            <person name="Clayton R.A."/>
            <person name="Kirkness E.F."/>
            <person name="Kerlavage A.R."/>
            <person name="Bult C.J."/>
            <person name="Tomb J.-F."/>
            <person name="Dougherty B.A."/>
            <person name="Merrick J.M."/>
            <person name="McKenney K."/>
            <person name="Sutton G.G."/>
            <person name="FitzHugh W."/>
            <person name="Fields C.A."/>
            <person name="Gocayne J.D."/>
            <person name="Scott J.D."/>
            <person name="Shirley R."/>
            <person name="Liu L.-I."/>
            <person name="Glodek A."/>
            <person name="Kelley J.M."/>
            <person name="Weidman J.F."/>
            <person name="Phillips C.A."/>
            <person name="Spriggs T."/>
            <person name="Hedblom E."/>
            <person name="Cotton M.D."/>
            <person name="Utterback T.R."/>
            <person name="Hanna M.C."/>
            <person name="Nguyen D.T."/>
            <person name="Saudek D.M."/>
            <person name="Brandon R.C."/>
            <person name="Fine L.D."/>
            <person name="Fritchman J.L."/>
            <person name="Fuhrmann J.L."/>
            <person name="Geoghagen N.S.M."/>
            <person name="Gnehm C.L."/>
            <person name="McDonald L.A."/>
            <person name="Small K.V."/>
            <person name="Fraser C.M."/>
            <person name="Smith H.O."/>
            <person name="Venter J.C."/>
        </authorList>
    </citation>
    <scope>NUCLEOTIDE SEQUENCE [LARGE SCALE GENOMIC DNA]</scope>
    <source>
        <strain>ATCC 51907 / DSM 11121 / KW20 / Rd</strain>
    </source>
</reference>
<keyword id="KW-0472">Membrane</keyword>
<keyword id="KW-1185">Reference proteome</keyword>
<keyword id="KW-0732">Signal</keyword>
<keyword id="KW-0812">Transmembrane</keyword>
<keyword id="KW-1133">Transmembrane helix</keyword>
<evidence type="ECO:0000255" key="1"/>
<evidence type="ECO:0000255" key="2">
    <source>
        <dbReference type="PROSITE-ProRule" id="PRU01117"/>
    </source>
</evidence>
<evidence type="ECO:0000305" key="3"/>
<gene>
    <name type="ordered locus">HI_1605</name>
</gene>
<accession>P44272</accession>
<dbReference type="EMBL" id="L42023">
    <property type="protein sequence ID" value="AAC23249.1"/>
    <property type="molecule type" value="Genomic_DNA"/>
</dbReference>
<dbReference type="PIR" id="C64038">
    <property type="entry name" value="C64038"/>
</dbReference>
<dbReference type="RefSeq" id="NP_439747.1">
    <property type="nucleotide sequence ID" value="NC_000907.1"/>
</dbReference>
<dbReference type="SMR" id="P44272"/>
<dbReference type="STRING" id="71421.HI_1605"/>
<dbReference type="EnsemblBacteria" id="AAC23249">
    <property type="protein sequence ID" value="AAC23249"/>
    <property type="gene ID" value="HI_1605"/>
</dbReference>
<dbReference type="KEGG" id="hin:HI_1605"/>
<dbReference type="PATRIC" id="fig|71421.8.peg.1678"/>
<dbReference type="eggNOG" id="COG4991">
    <property type="taxonomic scope" value="Bacteria"/>
</dbReference>
<dbReference type="HOGENOM" id="CLU_094106_0_2_6"/>
<dbReference type="OrthoDB" id="9790951at2"/>
<dbReference type="PhylomeDB" id="P44272"/>
<dbReference type="BioCyc" id="HINF71421:G1GJ1-1618-MONOMER"/>
<dbReference type="Proteomes" id="UP000000579">
    <property type="component" value="Chromosome"/>
</dbReference>
<dbReference type="GO" id="GO:0016020">
    <property type="term" value="C:membrane"/>
    <property type="evidence" value="ECO:0007669"/>
    <property type="project" value="UniProtKB-SubCell"/>
</dbReference>
<dbReference type="Gene3D" id="2.30.30.40">
    <property type="entry name" value="SH3 Domains"/>
    <property type="match status" value="1"/>
</dbReference>
<dbReference type="InterPro" id="IPR003646">
    <property type="entry name" value="SH3-like_bac-type"/>
</dbReference>
<dbReference type="InterPro" id="IPR016476">
    <property type="entry name" value="SH3_dom_pro"/>
</dbReference>
<dbReference type="NCBIfam" id="TIGR04211">
    <property type="entry name" value="SH3_and_anchor"/>
    <property type="match status" value="1"/>
</dbReference>
<dbReference type="Pfam" id="PF08239">
    <property type="entry name" value="SH3_3"/>
    <property type="match status" value="1"/>
</dbReference>
<dbReference type="PIRSF" id="PIRSF006158">
    <property type="entry name" value="UCP006158_SH3"/>
    <property type="match status" value="1"/>
</dbReference>
<dbReference type="SMART" id="SM00287">
    <property type="entry name" value="SH3b"/>
    <property type="match status" value="1"/>
</dbReference>
<dbReference type="PROSITE" id="PS51781">
    <property type="entry name" value="SH3B"/>
    <property type="match status" value="1"/>
</dbReference>
<feature type="signal peptide" evidence="1">
    <location>
        <begin position="1"/>
        <end position="23"/>
    </location>
</feature>
<feature type="chain" id="PRO_0000013901" description="Uncharacterized protein HI_1605">
    <location>
        <begin position="24"/>
        <end position="203"/>
    </location>
</feature>
<feature type="transmembrane region" description="Helical" evidence="1">
    <location>
        <begin position="167"/>
        <end position="189"/>
    </location>
</feature>
<feature type="domain" description="SH3b" evidence="2">
    <location>
        <begin position="24"/>
        <end position="87"/>
    </location>
</feature>
<proteinExistence type="inferred from homology"/>
<protein>
    <recommendedName>
        <fullName>Uncharacterized protein HI_1605</fullName>
    </recommendedName>
</protein>
<name>Y1605_HAEIN</name>
<sequence>MKKIYKALISSLLLSTSINVAYAETQYVTENLSTFLRRGAGEQFKIAGSIQAGEAVNVLDRQGKYTLIRDNKNREAWILNSDLSSTPSSKEENPKLKAQVQELTLKLSRLDGDWQQRTVEMQRRTKQAEQQSAVLLEQNSQLKRELEMTKNKNRDLEAILDAGKREIAIQWFIYGGSVLGVGLLFGLLIPYVLPKRRRRDGWA</sequence>
<comment type="subcellular location">
    <subcellularLocation>
        <location evidence="3">Membrane</location>
        <topology evidence="3">Single-pass membrane protein</topology>
    </subcellularLocation>
</comment>
<comment type="similarity">
    <text evidence="3">To E.coli YgiM.</text>
</comment>